<proteinExistence type="inferred from homology"/>
<reference key="1">
    <citation type="submission" date="2009-06" db="EMBL/GenBank/DDBJ databases">
        <title>Complete sequence of chromosome of Geopacillus sp. WCH70.</title>
        <authorList>
            <consortium name="US DOE Joint Genome Institute"/>
            <person name="Lucas S."/>
            <person name="Copeland A."/>
            <person name="Lapidus A."/>
            <person name="Glavina del Rio T."/>
            <person name="Dalin E."/>
            <person name="Tice H."/>
            <person name="Bruce D."/>
            <person name="Goodwin L."/>
            <person name="Pitluck S."/>
            <person name="Chertkov O."/>
            <person name="Brettin T."/>
            <person name="Detter J.C."/>
            <person name="Han C."/>
            <person name="Larimer F."/>
            <person name="Land M."/>
            <person name="Hauser L."/>
            <person name="Kyrpides N."/>
            <person name="Mikhailova N."/>
            <person name="Brumm P."/>
            <person name="Mead D.A."/>
            <person name="Richardson P."/>
        </authorList>
    </citation>
    <scope>NUCLEOTIDE SEQUENCE [LARGE SCALE GENOMIC DNA]</scope>
    <source>
        <strain>WCH70</strain>
    </source>
</reference>
<gene>
    <name evidence="1" type="primary">pepA</name>
    <name type="ordered locus">GWCH70_2878</name>
</gene>
<protein>
    <recommendedName>
        <fullName evidence="1">Probable cytosol aminopeptidase</fullName>
        <ecNumber evidence="1">3.4.11.1</ecNumber>
    </recommendedName>
    <alternativeName>
        <fullName evidence="1">Leucine aminopeptidase</fullName>
        <shortName evidence="1">LAP</shortName>
        <ecNumber evidence="1">3.4.11.10</ecNumber>
    </alternativeName>
    <alternativeName>
        <fullName evidence="1">Leucyl aminopeptidase</fullName>
    </alternativeName>
</protein>
<dbReference type="EC" id="3.4.11.1" evidence="1"/>
<dbReference type="EC" id="3.4.11.10" evidence="1"/>
<dbReference type="EMBL" id="CP001638">
    <property type="protein sequence ID" value="ACS25559.1"/>
    <property type="molecule type" value="Genomic_DNA"/>
</dbReference>
<dbReference type="SMR" id="C5D720"/>
<dbReference type="STRING" id="471223.GWCH70_2878"/>
<dbReference type="MEROPS" id="M17.010"/>
<dbReference type="KEGG" id="gwc:GWCH70_2878"/>
<dbReference type="eggNOG" id="COG0260">
    <property type="taxonomic scope" value="Bacteria"/>
</dbReference>
<dbReference type="HOGENOM" id="CLU_013734_6_0_9"/>
<dbReference type="OrthoDB" id="9809354at2"/>
<dbReference type="GO" id="GO:0005737">
    <property type="term" value="C:cytoplasm"/>
    <property type="evidence" value="ECO:0007669"/>
    <property type="project" value="UniProtKB-SubCell"/>
</dbReference>
<dbReference type="GO" id="GO:0030145">
    <property type="term" value="F:manganese ion binding"/>
    <property type="evidence" value="ECO:0007669"/>
    <property type="project" value="UniProtKB-UniRule"/>
</dbReference>
<dbReference type="GO" id="GO:0070006">
    <property type="term" value="F:metalloaminopeptidase activity"/>
    <property type="evidence" value="ECO:0007669"/>
    <property type="project" value="InterPro"/>
</dbReference>
<dbReference type="GO" id="GO:0006508">
    <property type="term" value="P:proteolysis"/>
    <property type="evidence" value="ECO:0007669"/>
    <property type="project" value="UniProtKB-KW"/>
</dbReference>
<dbReference type="CDD" id="cd00433">
    <property type="entry name" value="Peptidase_M17"/>
    <property type="match status" value="1"/>
</dbReference>
<dbReference type="Gene3D" id="3.40.220.10">
    <property type="entry name" value="Leucine Aminopeptidase, subunit E, domain 1"/>
    <property type="match status" value="1"/>
</dbReference>
<dbReference type="Gene3D" id="3.40.630.10">
    <property type="entry name" value="Zn peptidases"/>
    <property type="match status" value="1"/>
</dbReference>
<dbReference type="HAMAP" id="MF_00181">
    <property type="entry name" value="Cytosol_peptidase_M17"/>
    <property type="match status" value="1"/>
</dbReference>
<dbReference type="InterPro" id="IPR011356">
    <property type="entry name" value="Leucine_aapep/pepB"/>
</dbReference>
<dbReference type="InterPro" id="IPR043472">
    <property type="entry name" value="Macro_dom-like"/>
</dbReference>
<dbReference type="InterPro" id="IPR000819">
    <property type="entry name" value="Peptidase_M17_C"/>
</dbReference>
<dbReference type="InterPro" id="IPR023042">
    <property type="entry name" value="Peptidase_M17_leu_NH2_pept"/>
</dbReference>
<dbReference type="InterPro" id="IPR008283">
    <property type="entry name" value="Peptidase_M17_N"/>
</dbReference>
<dbReference type="NCBIfam" id="NF002073">
    <property type="entry name" value="PRK00913.1-2"/>
    <property type="match status" value="1"/>
</dbReference>
<dbReference type="NCBIfam" id="NF002074">
    <property type="entry name" value="PRK00913.1-4"/>
    <property type="match status" value="1"/>
</dbReference>
<dbReference type="NCBIfam" id="NF002083">
    <property type="entry name" value="PRK00913.3-5"/>
    <property type="match status" value="1"/>
</dbReference>
<dbReference type="PANTHER" id="PTHR11963:SF23">
    <property type="entry name" value="CYTOSOL AMINOPEPTIDASE"/>
    <property type="match status" value="1"/>
</dbReference>
<dbReference type="PANTHER" id="PTHR11963">
    <property type="entry name" value="LEUCINE AMINOPEPTIDASE-RELATED"/>
    <property type="match status" value="1"/>
</dbReference>
<dbReference type="Pfam" id="PF00883">
    <property type="entry name" value="Peptidase_M17"/>
    <property type="match status" value="1"/>
</dbReference>
<dbReference type="Pfam" id="PF02789">
    <property type="entry name" value="Peptidase_M17_N"/>
    <property type="match status" value="1"/>
</dbReference>
<dbReference type="PRINTS" id="PR00481">
    <property type="entry name" value="LAMNOPPTDASE"/>
</dbReference>
<dbReference type="SUPFAM" id="SSF52949">
    <property type="entry name" value="Macro domain-like"/>
    <property type="match status" value="1"/>
</dbReference>
<dbReference type="SUPFAM" id="SSF53187">
    <property type="entry name" value="Zn-dependent exopeptidases"/>
    <property type="match status" value="1"/>
</dbReference>
<dbReference type="PROSITE" id="PS00631">
    <property type="entry name" value="CYTOSOL_AP"/>
    <property type="match status" value="1"/>
</dbReference>
<evidence type="ECO:0000255" key="1">
    <source>
        <dbReference type="HAMAP-Rule" id="MF_00181"/>
    </source>
</evidence>
<organism>
    <name type="scientific">Geobacillus sp. (strain WCH70)</name>
    <dbReference type="NCBI Taxonomy" id="471223"/>
    <lineage>
        <taxon>Bacteria</taxon>
        <taxon>Bacillati</taxon>
        <taxon>Bacillota</taxon>
        <taxon>Bacilli</taxon>
        <taxon>Bacillales</taxon>
        <taxon>Anoxybacillaceae</taxon>
        <taxon>Geobacillus</taxon>
    </lineage>
</organism>
<comment type="function">
    <text evidence="1">Presumably involved in the processing and regular turnover of intracellular proteins. Catalyzes the removal of unsubstituted N-terminal amino acids from various peptides.</text>
</comment>
<comment type="catalytic activity">
    <reaction evidence="1">
        <text>Release of an N-terminal amino acid, Xaa-|-Yaa-, in which Xaa is preferably Leu, but may be other amino acids including Pro although not Arg or Lys, and Yaa may be Pro. Amino acid amides and methyl esters are also readily hydrolyzed, but rates on arylamides are exceedingly low.</text>
        <dbReference type="EC" id="3.4.11.1"/>
    </reaction>
</comment>
<comment type="catalytic activity">
    <reaction evidence="1">
        <text>Release of an N-terminal amino acid, preferentially leucine, but not glutamic or aspartic acids.</text>
        <dbReference type="EC" id="3.4.11.10"/>
    </reaction>
</comment>
<comment type="cofactor">
    <cofactor evidence="1">
        <name>Mn(2+)</name>
        <dbReference type="ChEBI" id="CHEBI:29035"/>
    </cofactor>
    <text evidence="1">Binds 2 manganese ions per subunit.</text>
</comment>
<comment type="subcellular location">
    <subcellularLocation>
        <location evidence="1">Cytoplasm</location>
    </subcellularLocation>
</comment>
<comment type="similarity">
    <text evidence="1">Belongs to the peptidase M17 family.</text>
</comment>
<accession>C5D720</accession>
<sequence>MFTIKQQLSLDTTHEVLVVGMFEKNQPLDGIIAECDRRLGGQVSVLLKEGDISAKKKQISKVHTLNQAGVKRLYFVGLGKEEELTFDLLREAFGKLFKTLKQAKRTEAAIALDTFVTKDIDANDAAHALSEAYYLATYEFPGYKQKKNEPEKRIESITIYTEADQAEIEASVFVGSVYGKATNSARTLVNTPSNLLTAADLANYAVELANKYEFEYEILEKDDMEKLGMGAFLAVNQGSKNPPKMIVLKYQGKETWENVIGLVGKGVTFDTGGYSLKPRESMVDMKTDMAGAAAVLGAMEIIGELRPEQNVVAVIPATDNMISGEAFKPDDVITSMSGKTIEVKNTDAEGRLILADAITYAKHHGASYLIDVATLTGGVIVALGVHTTGAMTNNEALFEQVLEASAETGEFIWRLPITEKDKERVRSSKIADLNNSPGREGHAIMGGAFLGEFAEDTPWVHLDIAGTSVTSKEHDLGPSGATGVMVRTLATLVERFE</sequence>
<name>AMPA_GEOSW</name>
<keyword id="KW-0031">Aminopeptidase</keyword>
<keyword id="KW-0963">Cytoplasm</keyword>
<keyword id="KW-0378">Hydrolase</keyword>
<keyword id="KW-0464">Manganese</keyword>
<keyword id="KW-0479">Metal-binding</keyword>
<keyword id="KW-0645">Protease</keyword>
<feature type="chain" id="PRO_1000203829" description="Probable cytosol aminopeptidase">
    <location>
        <begin position="1"/>
        <end position="497"/>
    </location>
</feature>
<feature type="active site" evidence="1">
    <location>
        <position position="277"/>
    </location>
</feature>
<feature type="active site" evidence="1">
    <location>
        <position position="351"/>
    </location>
</feature>
<feature type="binding site" evidence="1">
    <location>
        <position position="265"/>
    </location>
    <ligand>
        <name>Mn(2+)</name>
        <dbReference type="ChEBI" id="CHEBI:29035"/>
        <label>2</label>
    </ligand>
</feature>
<feature type="binding site" evidence="1">
    <location>
        <position position="270"/>
    </location>
    <ligand>
        <name>Mn(2+)</name>
        <dbReference type="ChEBI" id="CHEBI:29035"/>
        <label>1</label>
    </ligand>
</feature>
<feature type="binding site" evidence="1">
    <location>
        <position position="270"/>
    </location>
    <ligand>
        <name>Mn(2+)</name>
        <dbReference type="ChEBI" id="CHEBI:29035"/>
        <label>2</label>
    </ligand>
</feature>
<feature type="binding site" evidence="1">
    <location>
        <position position="288"/>
    </location>
    <ligand>
        <name>Mn(2+)</name>
        <dbReference type="ChEBI" id="CHEBI:29035"/>
        <label>2</label>
    </ligand>
</feature>
<feature type="binding site" evidence="1">
    <location>
        <position position="347"/>
    </location>
    <ligand>
        <name>Mn(2+)</name>
        <dbReference type="ChEBI" id="CHEBI:29035"/>
        <label>1</label>
    </ligand>
</feature>
<feature type="binding site" evidence="1">
    <location>
        <position position="349"/>
    </location>
    <ligand>
        <name>Mn(2+)</name>
        <dbReference type="ChEBI" id="CHEBI:29035"/>
        <label>1</label>
    </ligand>
</feature>
<feature type="binding site" evidence="1">
    <location>
        <position position="349"/>
    </location>
    <ligand>
        <name>Mn(2+)</name>
        <dbReference type="ChEBI" id="CHEBI:29035"/>
        <label>2</label>
    </ligand>
</feature>